<dbReference type="EMBL" id="CP001396">
    <property type="protein sequence ID" value="ACR62849.1"/>
    <property type="molecule type" value="Genomic_DNA"/>
</dbReference>
<dbReference type="RefSeq" id="WP_001295356.1">
    <property type="nucleotide sequence ID" value="NC_012759.1"/>
</dbReference>
<dbReference type="SMR" id="C4ZQ92"/>
<dbReference type="GeneID" id="93776448"/>
<dbReference type="KEGG" id="ebw:BWG_0818"/>
<dbReference type="HOGENOM" id="CLU_123865_1_0_6"/>
<dbReference type="GO" id="GO:0005737">
    <property type="term" value="C:cytoplasm"/>
    <property type="evidence" value="ECO:0007669"/>
    <property type="project" value="UniProtKB-SubCell"/>
</dbReference>
<dbReference type="GO" id="GO:0003677">
    <property type="term" value="F:DNA binding"/>
    <property type="evidence" value="ECO:0007669"/>
    <property type="project" value="InterPro"/>
</dbReference>
<dbReference type="GO" id="GO:0009408">
    <property type="term" value="P:response to heat"/>
    <property type="evidence" value="ECO:0007669"/>
    <property type="project" value="UniProtKB-UniRule"/>
</dbReference>
<dbReference type="Gene3D" id="2.30.30.390">
    <property type="entry name" value="Hemimethylated DNA-binding domain"/>
    <property type="match status" value="1"/>
</dbReference>
<dbReference type="HAMAP" id="MF_01194">
    <property type="entry name" value="HspQ"/>
    <property type="match status" value="1"/>
</dbReference>
<dbReference type="InterPro" id="IPR011722">
    <property type="entry name" value="Hemimethylated_DNA-bd_dom"/>
</dbReference>
<dbReference type="InterPro" id="IPR036623">
    <property type="entry name" value="Hemimethylated_DNA-bd_sf"/>
</dbReference>
<dbReference type="InterPro" id="IPR022866">
    <property type="entry name" value="HspQ"/>
</dbReference>
<dbReference type="NCBIfam" id="NF010729">
    <property type="entry name" value="PRK14129.1"/>
    <property type="match status" value="1"/>
</dbReference>
<dbReference type="NCBIfam" id="TIGR02097">
    <property type="entry name" value="yccV"/>
    <property type="match status" value="1"/>
</dbReference>
<dbReference type="Pfam" id="PF08755">
    <property type="entry name" value="YccV-like"/>
    <property type="match status" value="1"/>
</dbReference>
<dbReference type="SMART" id="SM00992">
    <property type="entry name" value="YccV-like"/>
    <property type="match status" value="1"/>
</dbReference>
<dbReference type="SUPFAM" id="SSF141255">
    <property type="entry name" value="YccV-like"/>
    <property type="match status" value="1"/>
</dbReference>
<organism>
    <name type="scientific">Escherichia coli (strain K12 / MC4100 / BW2952)</name>
    <dbReference type="NCBI Taxonomy" id="595496"/>
    <lineage>
        <taxon>Bacteria</taxon>
        <taxon>Pseudomonadati</taxon>
        <taxon>Pseudomonadota</taxon>
        <taxon>Gammaproteobacteria</taxon>
        <taxon>Enterobacterales</taxon>
        <taxon>Enterobacteriaceae</taxon>
        <taxon>Escherichia</taxon>
    </lineage>
</organism>
<sequence length="105" mass="11779">MIASKFGIGQQVRHSLLGYLGVVVDIDPVYSLSEPSPDELAVNDELRAAPWYHVVMEDDNGLPVHTYLAEAQLSSELQDEHPEQPSMDELAQTIRKQLQAPRLRN</sequence>
<name>HSPQ_ECOBW</name>
<protein>
    <recommendedName>
        <fullName evidence="1">Heat shock protein HspQ</fullName>
    </recommendedName>
</protein>
<comment type="function">
    <text evidence="1">Involved in the degradation of certain denaturated proteins, including DnaA, during heat shock stress.</text>
</comment>
<comment type="subcellular location">
    <subcellularLocation>
        <location evidence="1">Cytoplasm</location>
    </subcellularLocation>
</comment>
<comment type="similarity">
    <text evidence="1">Belongs to the HspQ family.</text>
</comment>
<accession>C4ZQ92</accession>
<evidence type="ECO:0000255" key="1">
    <source>
        <dbReference type="HAMAP-Rule" id="MF_01194"/>
    </source>
</evidence>
<evidence type="ECO:0000256" key="2">
    <source>
        <dbReference type="SAM" id="MobiDB-lite"/>
    </source>
</evidence>
<gene>
    <name evidence="1" type="primary">hspQ</name>
    <name type="ordered locus">BWG_0818</name>
</gene>
<keyword id="KW-0963">Cytoplasm</keyword>
<keyword id="KW-0346">Stress response</keyword>
<feature type="chain" id="PRO_1000213800" description="Heat shock protein HspQ">
    <location>
        <begin position="1"/>
        <end position="105"/>
    </location>
</feature>
<feature type="region of interest" description="Disordered" evidence="2">
    <location>
        <begin position="75"/>
        <end position="105"/>
    </location>
</feature>
<proteinExistence type="inferred from homology"/>
<reference key="1">
    <citation type="journal article" date="2009" name="J. Bacteriol.">
        <title>Genomic sequencing reveals regulatory mutations and recombinational events in the widely used MC4100 lineage of Escherichia coli K-12.</title>
        <authorList>
            <person name="Ferenci T."/>
            <person name="Zhou Z."/>
            <person name="Betteridge T."/>
            <person name="Ren Y."/>
            <person name="Liu Y."/>
            <person name="Feng L."/>
            <person name="Reeves P.R."/>
            <person name="Wang L."/>
        </authorList>
    </citation>
    <scope>NUCLEOTIDE SEQUENCE [LARGE SCALE GENOMIC DNA]</scope>
    <source>
        <strain>K12 / MC4100 / BW2952</strain>
    </source>
</reference>